<proteinExistence type="inferred from homology"/>
<reference key="1">
    <citation type="journal article" date="2004" name="Nucleic Acids Res.">
        <title>Whole genome comparisons of serotype 4b and 1/2a strains of the food-borne pathogen Listeria monocytogenes reveal new insights into the core genome components of this species.</title>
        <authorList>
            <person name="Nelson K.E."/>
            <person name="Fouts D.E."/>
            <person name="Mongodin E.F."/>
            <person name="Ravel J."/>
            <person name="DeBoy R.T."/>
            <person name="Kolonay J.F."/>
            <person name="Rasko D.A."/>
            <person name="Angiuoli S.V."/>
            <person name="Gill S.R."/>
            <person name="Paulsen I.T."/>
            <person name="Peterson J.D."/>
            <person name="White O."/>
            <person name="Nelson W.C."/>
            <person name="Nierman W.C."/>
            <person name="Beanan M.J."/>
            <person name="Brinkac L.M."/>
            <person name="Daugherty S.C."/>
            <person name="Dodson R.J."/>
            <person name="Durkin A.S."/>
            <person name="Madupu R."/>
            <person name="Haft D.H."/>
            <person name="Selengut J."/>
            <person name="Van Aken S.E."/>
            <person name="Khouri H.M."/>
            <person name="Fedorova N."/>
            <person name="Forberger H.A."/>
            <person name="Tran B."/>
            <person name="Kathariou S."/>
            <person name="Wonderling L.D."/>
            <person name="Uhlich G.A."/>
            <person name="Bayles D.O."/>
            <person name="Luchansky J.B."/>
            <person name="Fraser C.M."/>
        </authorList>
    </citation>
    <scope>NUCLEOTIDE SEQUENCE [LARGE SCALE GENOMIC DNA]</scope>
    <source>
        <strain>F2365</strain>
    </source>
</reference>
<name>Y1885_LISMF</name>
<protein>
    <recommendedName>
        <fullName evidence="1">UPF0346 protein LMOf2365_1885</fullName>
    </recommendedName>
</protein>
<accession>Q71YF9</accession>
<dbReference type="EMBL" id="AE017262">
    <property type="protein sequence ID" value="AAT04655.1"/>
    <property type="molecule type" value="Genomic_DNA"/>
</dbReference>
<dbReference type="RefSeq" id="WP_003720177.1">
    <property type="nucleotide sequence ID" value="NC_002973.6"/>
</dbReference>
<dbReference type="SMR" id="Q71YF9"/>
<dbReference type="KEGG" id="lmf:LMOf2365_1885"/>
<dbReference type="HOGENOM" id="CLU_177534_1_0_9"/>
<dbReference type="Gene3D" id="1.10.150.260">
    <property type="entry name" value="YozE SAM-like"/>
    <property type="match status" value="1"/>
</dbReference>
<dbReference type="HAMAP" id="MF_01538">
    <property type="entry name" value="UPF0346"/>
    <property type="match status" value="1"/>
</dbReference>
<dbReference type="InterPro" id="IPR010673">
    <property type="entry name" value="UPF0346"/>
</dbReference>
<dbReference type="InterPro" id="IPR023089">
    <property type="entry name" value="YozE_SAM-like"/>
</dbReference>
<dbReference type="InterPro" id="IPR036806">
    <property type="entry name" value="YozE_SAM-like_sf"/>
</dbReference>
<dbReference type="NCBIfam" id="NF010193">
    <property type="entry name" value="PRK13672.1"/>
    <property type="match status" value="1"/>
</dbReference>
<dbReference type="Pfam" id="PF06855">
    <property type="entry name" value="YozE_SAM_like"/>
    <property type="match status" value="1"/>
</dbReference>
<dbReference type="PIRSF" id="PIRSF037262">
    <property type="entry name" value="UCP037262"/>
    <property type="match status" value="1"/>
</dbReference>
<dbReference type="SUPFAM" id="SSF140652">
    <property type="entry name" value="YozE-like"/>
    <property type="match status" value="1"/>
</dbReference>
<comment type="similarity">
    <text evidence="1">Belongs to the UPF0346 family.</text>
</comment>
<gene>
    <name type="ordered locus">LMOf2365_1885</name>
</gene>
<organism>
    <name type="scientific">Listeria monocytogenes serotype 4b (strain F2365)</name>
    <dbReference type="NCBI Taxonomy" id="265669"/>
    <lineage>
        <taxon>Bacteria</taxon>
        <taxon>Bacillati</taxon>
        <taxon>Bacillota</taxon>
        <taxon>Bacilli</taxon>
        <taxon>Bacillales</taxon>
        <taxon>Listeriaceae</taxon>
        <taxon>Listeria</taxon>
    </lineage>
</organism>
<evidence type="ECO:0000255" key="1">
    <source>
        <dbReference type="HAMAP-Rule" id="MF_01538"/>
    </source>
</evidence>
<sequence length="77" mass="9403">MGRSFYHFLMTYRDPKLTDQKTEFANNAYRDHSFPKQTRNYHILCDYLEFNAPYLPGMSIFDELWDAYLLDEEKNKH</sequence>
<feature type="chain" id="PRO_0000164278" description="UPF0346 protein LMOf2365_1885">
    <location>
        <begin position="1"/>
        <end position="77"/>
    </location>
</feature>